<sequence length="191" mass="20997">MRLPLLVSAGVLLVALLPCPPCRALLSRGPVLGARQAPQHPQALDFLQPQQQPQQPQPRPVLLRMGEEYFLRLGNLNKSPAAPLSPASSPLTGSSGNRPDEVAANFFRALLQQLPLPRRPLDSPSGPAERGAENALSSRQEAPERERRSEEPPISLDLTFHLLREVLEMARAEQLAQQAHSNRKLMEIIGK</sequence>
<reference key="1">
    <citation type="journal article" date="1998" name="J. Anim. Sci.">
        <title>Molecular cloning of the porcine corticotropin-releasing factor gene.</title>
        <authorList>
            <person name="Mimmack M.L."/>
            <person name="Parrott R.F."/>
            <person name="Vellucci S.V."/>
        </authorList>
    </citation>
    <scope>NUCLEOTIDE SEQUENCE [GENOMIC DNA]</scope>
</reference>
<reference key="2">
    <citation type="journal article" date="2002" name="Anim. Genet.">
        <title>Sequence variation and linkage mapping of the porcine corticotropin releasing hormone (CRH) gene.</title>
        <authorList>
            <person name="Wimmers K."/>
            <person name="Murani E."/>
            <person name="Ponsuksili S."/>
            <person name="Schellander K."/>
        </authorList>
    </citation>
    <scope>NUCLEOTIDE SEQUENCE [GENOMIC DNA]</scope>
</reference>
<reference key="3">
    <citation type="journal article" date="2006" name="Biochem. Biophys. Res. Commun.">
        <title>Molecular characterization and evidencing of the porcine CRH gene as a functional-positional candidate for growth and body composition.</title>
        <authorList>
            <person name="Murani E."/>
            <person name="Muraniova M."/>
            <person name="Ponsuksili S."/>
            <person name="Schellander K."/>
            <person name="Wimmers K."/>
        </authorList>
    </citation>
    <scope>NUCLEOTIDE SEQUENCE [GENOMIC DNA]</scope>
</reference>
<reference key="4">
    <citation type="journal article" date="1985" name="Proc. Natl. Acad. Sci. U.S.A.">
        <title>Isolation and amino acid sequence of corticotropin-releasing factor from pig hypothalami.</title>
        <authorList>
            <person name="Patthy M."/>
            <person name="Horvath J."/>
            <person name="Mason-Garcia M."/>
            <person name="Szoke B."/>
            <person name="Schlesinger D.H."/>
            <person name="Schally A.V."/>
        </authorList>
    </citation>
    <scope>PROTEIN SEQUENCE OF 149-189</scope>
    <scope>FUNCTION</scope>
    <scope>SUBCELLULAR LOCATION</scope>
    <scope>TISSUE SPECIFICITY</scope>
</reference>
<dbReference type="EMBL" id="Y15159">
    <property type="protein sequence ID" value="CAA75424.1"/>
    <property type="molecule type" value="Genomic_DNA"/>
</dbReference>
<dbReference type="EMBL" id="AF440229">
    <property type="protein sequence ID" value="AAN40888.1"/>
    <property type="molecule type" value="Genomic_DNA"/>
</dbReference>
<dbReference type="EMBL" id="DQ358705">
    <property type="protein sequence ID" value="ABD34973.1"/>
    <property type="molecule type" value="Genomic_DNA"/>
</dbReference>
<dbReference type="PIR" id="A01404">
    <property type="entry name" value="RHPGCE"/>
</dbReference>
<dbReference type="RefSeq" id="NP_001106533.1">
    <property type="nucleotide sequence ID" value="NM_001113062.1"/>
</dbReference>
<dbReference type="RefSeq" id="XP_013852166.1">
    <property type="nucleotide sequence ID" value="XM_013996712.1"/>
</dbReference>
<dbReference type="RefSeq" id="XP_020944111.1">
    <property type="nucleotide sequence ID" value="XM_021088452.1"/>
</dbReference>
<dbReference type="FunCoup" id="P06296">
    <property type="interactions" value="420"/>
</dbReference>
<dbReference type="STRING" id="9823.ENSSSCP00000006626"/>
<dbReference type="PaxDb" id="9823-ENSSSCP00000006626"/>
<dbReference type="Ensembl" id="ENSSSCT00000006811.4">
    <property type="protein sequence ID" value="ENSSSCP00000006626.1"/>
    <property type="gene ID" value="ENSSSCG00000006215.5"/>
</dbReference>
<dbReference type="Ensembl" id="ENSSSCT00015020175.1">
    <property type="protein sequence ID" value="ENSSSCP00015007900.1"/>
    <property type="gene ID" value="ENSSSCG00015015252.1"/>
</dbReference>
<dbReference type="Ensembl" id="ENSSSCT00015020200.1">
    <property type="protein sequence ID" value="ENSSSCP00015007907.1"/>
    <property type="gene ID" value="ENSSSCG00015015252.1"/>
</dbReference>
<dbReference type="Ensembl" id="ENSSSCT00025029486.1">
    <property type="protein sequence ID" value="ENSSSCP00025012531.1"/>
    <property type="gene ID" value="ENSSSCG00025021688.1"/>
</dbReference>
<dbReference type="Ensembl" id="ENSSSCT00025029504.1">
    <property type="protein sequence ID" value="ENSSSCP00025012539.1"/>
    <property type="gene ID" value="ENSSSCG00025021688.1"/>
</dbReference>
<dbReference type="Ensembl" id="ENSSSCT00030046261.1">
    <property type="protein sequence ID" value="ENSSSCP00030020829.1"/>
    <property type="gene ID" value="ENSSSCG00030033445.1"/>
</dbReference>
<dbReference type="Ensembl" id="ENSSSCT00030046286.1">
    <property type="protein sequence ID" value="ENSSSCP00030020845.1"/>
    <property type="gene ID" value="ENSSSCG00030033445.1"/>
</dbReference>
<dbReference type="Ensembl" id="ENSSSCT00035023013.1">
    <property type="protein sequence ID" value="ENSSSCP00035008526.1"/>
    <property type="gene ID" value="ENSSSCG00035017872.1"/>
</dbReference>
<dbReference type="Ensembl" id="ENSSSCT00035023017.1">
    <property type="protein sequence ID" value="ENSSSCP00035008528.1"/>
    <property type="gene ID" value="ENSSSCG00035017872.1"/>
</dbReference>
<dbReference type="Ensembl" id="ENSSSCT00040039833.1">
    <property type="protein sequence ID" value="ENSSSCP00040016691.1"/>
    <property type="gene ID" value="ENSSSCG00040029641.1"/>
</dbReference>
<dbReference type="Ensembl" id="ENSSSCT00040039880.1">
    <property type="protein sequence ID" value="ENSSSCP00040016712.1"/>
    <property type="gene ID" value="ENSSSCG00040029641.1"/>
</dbReference>
<dbReference type="Ensembl" id="ENSSSCT00045018533.1">
    <property type="protein sequence ID" value="ENSSSCP00045012779.1"/>
    <property type="gene ID" value="ENSSSCG00045010902.1"/>
</dbReference>
<dbReference type="Ensembl" id="ENSSSCT00045018560.1">
    <property type="protein sequence ID" value="ENSSSCP00045012796.1"/>
    <property type="gene ID" value="ENSSSCG00045010902.1"/>
</dbReference>
<dbReference type="Ensembl" id="ENSSSCT00050023611.1">
    <property type="protein sequence ID" value="ENSSSCP00050009950.1"/>
    <property type="gene ID" value="ENSSSCG00050017351.1"/>
</dbReference>
<dbReference type="Ensembl" id="ENSSSCT00050023618.1">
    <property type="protein sequence ID" value="ENSSSCP00050009952.1"/>
    <property type="gene ID" value="ENSSSCG00050017351.1"/>
</dbReference>
<dbReference type="Ensembl" id="ENSSSCT00055021798.1">
    <property type="protein sequence ID" value="ENSSSCP00055017255.1"/>
    <property type="gene ID" value="ENSSSCG00055011116.1"/>
</dbReference>
<dbReference type="Ensembl" id="ENSSSCT00055021821.1">
    <property type="protein sequence ID" value="ENSSSCP00055017271.1"/>
    <property type="gene ID" value="ENSSSCG00055011116.1"/>
</dbReference>
<dbReference type="Ensembl" id="ENSSSCT00060070263.1">
    <property type="protein sequence ID" value="ENSSSCP00060030326.1"/>
    <property type="gene ID" value="ENSSSCG00060051620.1"/>
</dbReference>
<dbReference type="Ensembl" id="ENSSSCT00060070268.1">
    <property type="protein sequence ID" value="ENSSSCP00060030328.1"/>
    <property type="gene ID" value="ENSSSCG00060051620.1"/>
</dbReference>
<dbReference type="Ensembl" id="ENSSSCT00065094580.1">
    <property type="protein sequence ID" value="ENSSSCP00065041366.1"/>
    <property type="gene ID" value="ENSSSCG00065068899.1"/>
</dbReference>
<dbReference type="Ensembl" id="ENSSSCT00065094586.1">
    <property type="protein sequence ID" value="ENSSSCP00065041369.1"/>
    <property type="gene ID" value="ENSSSCG00065068899.1"/>
</dbReference>
<dbReference type="Ensembl" id="ENSSSCT00070040731.1">
    <property type="protein sequence ID" value="ENSSSCP00070034176.1"/>
    <property type="gene ID" value="ENSSSCG00070020495.1"/>
</dbReference>
<dbReference type="Ensembl" id="ENSSSCT00085042707">
    <property type="protein sequence ID" value="ENSSSCP00085030043"/>
    <property type="gene ID" value="ENSSSCG00085022256"/>
</dbReference>
<dbReference type="Ensembl" id="ENSSSCT00090017152">
    <property type="protein sequence ID" value="ENSSSCP00090010978"/>
    <property type="gene ID" value="ENSSSCG00090009572"/>
</dbReference>
<dbReference type="Ensembl" id="ENSSSCT00105014618">
    <property type="protein sequence ID" value="ENSSSCP00105010620"/>
    <property type="gene ID" value="ENSSSCG00105007277"/>
</dbReference>
<dbReference type="Ensembl" id="ENSSSCT00110051847">
    <property type="protein sequence ID" value="ENSSSCP00110036268"/>
    <property type="gene ID" value="ENSSSCG00110027035"/>
</dbReference>
<dbReference type="Ensembl" id="ENSSSCT00115023839">
    <property type="protein sequence ID" value="ENSSSCP00115022605"/>
    <property type="gene ID" value="ENSSSCG00115013739"/>
</dbReference>
<dbReference type="Ensembl" id="ENSSSCT00130013324">
    <property type="protein sequence ID" value="ENSSSCP00130008891"/>
    <property type="gene ID" value="ENSSSCG00130007297"/>
</dbReference>
<dbReference type="GeneID" id="100127468"/>
<dbReference type="KEGG" id="ssc:100127468"/>
<dbReference type="CTD" id="1392"/>
<dbReference type="VGNC" id="VGNC:86992">
    <property type="gene designation" value="CRH"/>
</dbReference>
<dbReference type="eggNOG" id="ENOG502S25G">
    <property type="taxonomic scope" value="Eukaryota"/>
</dbReference>
<dbReference type="GeneTree" id="ENSGT00940000154473"/>
<dbReference type="HOGENOM" id="CLU_136288_0_0_1"/>
<dbReference type="InParanoid" id="P06296"/>
<dbReference type="OMA" id="QHFQERS"/>
<dbReference type="OrthoDB" id="9837731at2759"/>
<dbReference type="TreeFam" id="TF332956"/>
<dbReference type="Reactome" id="R-SSC-373080">
    <property type="pathway name" value="Class B/2 (Secretin family receptors)"/>
</dbReference>
<dbReference type="Reactome" id="R-SSC-418555">
    <property type="pathway name" value="G alpha (s) signalling events"/>
</dbReference>
<dbReference type="Proteomes" id="UP000008227">
    <property type="component" value="Chromosome 4"/>
</dbReference>
<dbReference type="Proteomes" id="UP000314985">
    <property type="component" value="Chromosome 4"/>
</dbReference>
<dbReference type="Proteomes" id="UP000694570">
    <property type="component" value="Unplaced"/>
</dbReference>
<dbReference type="Proteomes" id="UP000694571">
    <property type="component" value="Unplaced"/>
</dbReference>
<dbReference type="Proteomes" id="UP000694720">
    <property type="component" value="Unplaced"/>
</dbReference>
<dbReference type="Proteomes" id="UP000694722">
    <property type="component" value="Unplaced"/>
</dbReference>
<dbReference type="Proteomes" id="UP000694723">
    <property type="component" value="Unplaced"/>
</dbReference>
<dbReference type="Proteomes" id="UP000694724">
    <property type="component" value="Unplaced"/>
</dbReference>
<dbReference type="Proteomes" id="UP000694725">
    <property type="component" value="Unplaced"/>
</dbReference>
<dbReference type="Proteomes" id="UP000694726">
    <property type="component" value="Unplaced"/>
</dbReference>
<dbReference type="Proteomes" id="UP000694727">
    <property type="component" value="Unplaced"/>
</dbReference>
<dbReference type="Proteomes" id="UP000694728">
    <property type="component" value="Unplaced"/>
</dbReference>
<dbReference type="Bgee" id="ENSSSCG00000006215">
    <property type="expression patterns" value="Expressed in occipital cortex and 16 other cell types or tissues"/>
</dbReference>
<dbReference type="GO" id="GO:0005615">
    <property type="term" value="C:extracellular space"/>
    <property type="evidence" value="ECO:0000318"/>
    <property type="project" value="GO_Central"/>
</dbReference>
<dbReference type="GO" id="GO:0043025">
    <property type="term" value="C:neuronal cell body"/>
    <property type="evidence" value="ECO:0007669"/>
    <property type="project" value="Ensembl"/>
</dbReference>
<dbReference type="GO" id="GO:0045202">
    <property type="term" value="C:synapse"/>
    <property type="evidence" value="ECO:0007669"/>
    <property type="project" value="GOC"/>
</dbReference>
<dbReference type="GO" id="GO:0017045">
    <property type="term" value="F:corticotropin-releasing hormone activity"/>
    <property type="evidence" value="ECO:0000318"/>
    <property type="project" value="GO_Central"/>
</dbReference>
<dbReference type="GO" id="GO:0030325">
    <property type="term" value="P:adrenal gland development"/>
    <property type="evidence" value="ECO:0007669"/>
    <property type="project" value="Ensembl"/>
</dbReference>
<dbReference type="GO" id="GO:0007565">
    <property type="term" value="P:female pregnancy"/>
    <property type="evidence" value="ECO:0007669"/>
    <property type="project" value="Ensembl"/>
</dbReference>
<dbReference type="GO" id="GO:0006704">
    <property type="term" value="P:glucocorticoid biosynthetic process"/>
    <property type="evidence" value="ECO:0007669"/>
    <property type="project" value="Ensembl"/>
</dbReference>
<dbReference type="GO" id="GO:0006954">
    <property type="term" value="P:inflammatory response"/>
    <property type="evidence" value="ECO:0007669"/>
    <property type="project" value="Ensembl"/>
</dbReference>
<dbReference type="GO" id="GO:0035641">
    <property type="term" value="P:locomotory exploration behavior"/>
    <property type="evidence" value="ECO:0007669"/>
    <property type="project" value="Ensembl"/>
</dbReference>
<dbReference type="GO" id="GO:0030324">
    <property type="term" value="P:lung development"/>
    <property type="evidence" value="ECO:0007669"/>
    <property type="project" value="Ensembl"/>
</dbReference>
<dbReference type="GO" id="GO:0032811">
    <property type="term" value="P:negative regulation of epinephrine secretion"/>
    <property type="evidence" value="ECO:0000318"/>
    <property type="project" value="GO_Central"/>
</dbReference>
<dbReference type="GO" id="GO:0070093">
    <property type="term" value="P:negative regulation of glucagon secretion"/>
    <property type="evidence" value="ECO:0000318"/>
    <property type="project" value="GO_Central"/>
</dbReference>
<dbReference type="GO" id="GO:0051461">
    <property type="term" value="P:positive regulation of corticotropin secretion"/>
    <property type="evidence" value="ECO:0007669"/>
    <property type="project" value="Ensembl"/>
</dbReference>
<dbReference type="GO" id="GO:0051464">
    <property type="term" value="P:positive regulation of cortisol secretion"/>
    <property type="evidence" value="ECO:0000318"/>
    <property type="project" value="GO_Central"/>
</dbReference>
<dbReference type="GO" id="GO:0001963">
    <property type="term" value="P:synaptic transmission, dopaminergic"/>
    <property type="evidence" value="ECO:0007669"/>
    <property type="project" value="Ensembl"/>
</dbReference>
<dbReference type="Gene3D" id="6.10.250.1920">
    <property type="match status" value="1"/>
</dbReference>
<dbReference type="InterPro" id="IPR018446">
    <property type="entry name" value="Corticotropin-releasing_fac_CS"/>
</dbReference>
<dbReference type="InterPro" id="IPR000187">
    <property type="entry name" value="CRF"/>
</dbReference>
<dbReference type="InterPro" id="IPR003620">
    <property type="entry name" value="Urocortin_CRF"/>
</dbReference>
<dbReference type="PANTHER" id="PTHR15035:SF9">
    <property type="entry name" value="CORTICOLIBERIN"/>
    <property type="match status" value="1"/>
</dbReference>
<dbReference type="PANTHER" id="PTHR15035">
    <property type="entry name" value="CORTICOLIBERIN/UROCORTIN"/>
    <property type="match status" value="1"/>
</dbReference>
<dbReference type="Pfam" id="PF00473">
    <property type="entry name" value="CRF"/>
    <property type="match status" value="1"/>
</dbReference>
<dbReference type="PRINTS" id="PR01612">
    <property type="entry name" value="CRFFAMILY"/>
</dbReference>
<dbReference type="SMART" id="SM00039">
    <property type="entry name" value="CRF"/>
    <property type="match status" value="1"/>
</dbReference>
<dbReference type="PROSITE" id="PS00511">
    <property type="entry name" value="CRF"/>
    <property type="match status" value="1"/>
</dbReference>
<gene>
    <name type="primary">CRH</name>
</gene>
<comment type="function">
    <text evidence="2 5">Hormone regulating the release of corticotropin from pituitary gland (PubMed:3878520). Induces NLRP6 in intestinal epithelial cells, hence may influence gut microbiota profile (By similarity).</text>
</comment>
<comment type="subunit">
    <text evidence="1">Interacts (via C-terminus) with CRFR1 (via N-terminal extracellular domain).</text>
</comment>
<comment type="subcellular location">
    <subcellularLocation>
        <location evidence="5">Secreted</location>
    </subcellularLocation>
</comment>
<comment type="tissue specificity">
    <text evidence="5">Produced by the hypothalamus.</text>
</comment>
<comment type="similarity">
    <text evidence="6">Belongs to the sauvagine/corticotropin-releasing factor/urotensin I family.</text>
</comment>
<protein>
    <recommendedName>
        <fullName>Corticoliberin</fullName>
    </recommendedName>
    <alternativeName>
        <fullName>Corticotropin-releasing factor</fullName>
        <shortName>CRF</shortName>
    </alternativeName>
    <alternativeName>
        <fullName>Corticotropin-releasing hormone</fullName>
    </alternativeName>
</protein>
<organism>
    <name type="scientific">Sus scrofa</name>
    <name type="common">Pig</name>
    <dbReference type="NCBI Taxonomy" id="9823"/>
    <lineage>
        <taxon>Eukaryota</taxon>
        <taxon>Metazoa</taxon>
        <taxon>Chordata</taxon>
        <taxon>Craniata</taxon>
        <taxon>Vertebrata</taxon>
        <taxon>Euteleostomi</taxon>
        <taxon>Mammalia</taxon>
        <taxon>Eutheria</taxon>
        <taxon>Laurasiatheria</taxon>
        <taxon>Artiodactyla</taxon>
        <taxon>Suina</taxon>
        <taxon>Suidae</taxon>
        <taxon>Sus</taxon>
    </lineage>
</organism>
<name>CRF_PIG</name>
<evidence type="ECO:0000250" key="1">
    <source>
        <dbReference type="UniProtKB" id="P06850"/>
    </source>
</evidence>
<evidence type="ECO:0000250" key="2">
    <source>
        <dbReference type="UniProtKB" id="Q8CIT0"/>
    </source>
</evidence>
<evidence type="ECO:0000255" key="3"/>
<evidence type="ECO:0000256" key="4">
    <source>
        <dbReference type="SAM" id="MobiDB-lite"/>
    </source>
</evidence>
<evidence type="ECO:0000269" key="5">
    <source>
    </source>
</evidence>
<evidence type="ECO:0000305" key="6"/>
<accession>P06296</accession>
<accession>O62637</accession>
<accession>Q0ZLZ2</accession>
<accession>Q8HZV1</accession>
<proteinExistence type="evidence at protein level"/>
<keyword id="KW-0027">Amidation</keyword>
<keyword id="KW-0165">Cleavage on pair of basic residues</keyword>
<keyword id="KW-0903">Direct protein sequencing</keyword>
<keyword id="KW-0372">Hormone</keyword>
<keyword id="KW-1185">Reference proteome</keyword>
<keyword id="KW-0964">Secreted</keyword>
<keyword id="KW-0732">Signal</keyword>
<feature type="signal peptide" evidence="3">
    <location>
        <begin position="1"/>
        <end position="24"/>
    </location>
</feature>
<feature type="propeptide" id="PRO_0000006216" evidence="5">
    <location>
        <begin position="25"/>
        <end position="148"/>
    </location>
</feature>
<feature type="peptide" id="PRO_0000006217" description="Corticoliberin">
    <location>
        <begin position="149"/>
        <end position="189"/>
    </location>
</feature>
<feature type="region of interest" description="Disordered" evidence="4">
    <location>
        <begin position="115"/>
        <end position="153"/>
    </location>
</feature>
<feature type="compositionally biased region" description="Basic and acidic residues" evidence="4">
    <location>
        <begin position="141"/>
        <end position="151"/>
    </location>
</feature>
<feature type="modified residue" description="Isoleucine amide" evidence="1">
    <location>
        <position position="189"/>
    </location>
</feature>
<feature type="sequence conflict" description="In Ref. 2; AAN40888." evidence="6" ref="2">
    <original>V</original>
    <variation>A</variation>
    <location>
        <position position="7"/>
    </location>
</feature>
<feature type="sequence conflict" description="In Ref. 1; CAA75424." evidence="6" ref="1">
    <original>QH</original>
    <variation>HS</variation>
    <location>
        <begin position="39"/>
        <end position="40"/>
    </location>
</feature>
<feature type="sequence conflict" description="In Ref. 1; CAA75424." evidence="6" ref="1">
    <original>S</original>
    <variation>N</variation>
    <location>
        <position position="79"/>
    </location>
</feature>
<feature type="sequence conflict" description="In Ref. 1; CAA75424." evidence="6" ref="1">
    <original>P</original>
    <variation>R</variation>
    <location>
        <position position="120"/>
    </location>
</feature>
<feature type="sequence conflict" description="In Ref. 4; AA sequence." evidence="6" ref="4">
    <original>I</original>
    <variation>F</variation>
    <location>
        <position position="188"/>
    </location>
</feature>